<reference key="1">
    <citation type="journal article" date="2005" name="Nature">
        <title>The genome of the social amoeba Dictyostelium discoideum.</title>
        <authorList>
            <person name="Eichinger L."/>
            <person name="Pachebat J.A."/>
            <person name="Gloeckner G."/>
            <person name="Rajandream M.A."/>
            <person name="Sucgang R."/>
            <person name="Berriman M."/>
            <person name="Song J."/>
            <person name="Olsen R."/>
            <person name="Szafranski K."/>
            <person name="Xu Q."/>
            <person name="Tunggal B."/>
            <person name="Kummerfeld S."/>
            <person name="Madera M."/>
            <person name="Konfortov B.A."/>
            <person name="Rivero F."/>
            <person name="Bankier A.T."/>
            <person name="Lehmann R."/>
            <person name="Hamlin N."/>
            <person name="Davies R."/>
            <person name="Gaudet P."/>
            <person name="Fey P."/>
            <person name="Pilcher K."/>
            <person name="Chen G."/>
            <person name="Saunders D."/>
            <person name="Sodergren E.J."/>
            <person name="Davis P."/>
            <person name="Kerhornou A."/>
            <person name="Nie X."/>
            <person name="Hall N."/>
            <person name="Anjard C."/>
            <person name="Hemphill L."/>
            <person name="Bason N."/>
            <person name="Farbrother P."/>
            <person name="Desany B."/>
            <person name="Just E."/>
            <person name="Morio T."/>
            <person name="Rost R."/>
            <person name="Churcher C.M."/>
            <person name="Cooper J."/>
            <person name="Haydock S."/>
            <person name="van Driessche N."/>
            <person name="Cronin A."/>
            <person name="Goodhead I."/>
            <person name="Muzny D.M."/>
            <person name="Mourier T."/>
            <person name="Pain A."/>
            <person name="Lu M."/>
            <person name="Harper D."/>
            <person name="Lindsay R."/>
            <person name="Hauser H."/>
            <person name="James K.D."/>
            <person name="Quiles M."/>
            <person name="Madan Babu M."/>
            <person name="Saito T."/>
            <person name="Buchrieser C."/>
            <person name="Wardroper A."/>
            <person name="Felder M."/>
            <person name="Thangavelu M."/>
            <person name="Johnson D."/>
            <person name="Knights A."/>
            <person name="Loulseged H."/>
            <person name="Mungall K.L."/>
            <person name="Oliver K."/>
            <person name="Price C."/>
            <person name="Quail M.A."/>
            <person name="Urushihara H."/>
            <person name="Hernandez J."/>
            <person name="Rabbinowitsch E."/>
            <person name="Steffen D."/>
            <person name="Sanders M."/>
            <person name="Ma J."/>
            <person name="Kohara Y."/>
            <person name="Sharp S."/>
            <person name="Simmonds M.N."/>
            <person name="Spiegler S."/>
            <person name="Tivey A."/>
            <person name="Sugano S."/>
            <person name="White B."/>
            <person name="Walker D."/>
            <person name="Woodward J.R."/>
            <person name="Winckler T."/>
            <person name="Tanaka Y."/>
            <person name="Shaulsky G."/>
            <person name="Schleicher M."/>
            <person name="Weinstock G.M."/>
            <person name="Rosenthal A."/>
            <person name="Cox E.C."/>
            <person name="Chisholm R.L."/>
            <person name="Gibbs R.A."/>
            <person name="Loomis W.F."/>
            <person name="Platzer M."/>
            <person name="Kay R.R."/>
            <person name="Williams J.G."/>
            <person name="Dear P.H."/>
            <person name="Noegel A.A."/>
            <person name="Barrell B.G."/>
            <person name="Kuspa A."/>
        </authorList>
    </citation>
    <scope>NUCLEOTIDE SEQUENCE [LARGE SCALE GENOMIC DNA]</scope>
    <source>
        <strain>AX4</strain>
    </source>
</reference>
<gene>
    <name type="primary">7tmk2</name>
    <name type="ORF">DDB_G0281331</name>
</gene>
<name>7TMK2_DICDI</name>
<sequence length="704" mass="80382">MPSKEFIIPLILLCFYSVNGFVAVISSLVELFIHKASWNSIKIFFYSLLILQCLCRCIIIGWGMIETVQGGEFYSNFPSLLFISYAGLVALQMIQFLPNDNQYLLLSEGKKNNHKVKVGTNILIFFNLFMYFGMFLLFGIAEKQVGNSTSFNHHGNHNSTTSTSTDEIPLVSTEVGELYLFGDKDPIYIVLDCFYFVCLLLLLIFHSYVGWKTYKRNKDLFGIKLNVIHLILLICIFIRSLLVIIDPSSPNNSILHIDTESWLIYIYTISYYVVGEIIPGMLLIVIEFLLPYHKRKDFINIGGELSSYQDVWKSENIAIHELLGMGGSGAMVHKCTVKKGPLRGGTFAVKVMKDCTNEDIESLENEIRVYEKLKSPYIVSYQGSSKVVGSSGQIFEIRLFMEYIPHTLDKYLLARSVCGDSNGGGSSRNLKNYFLHMQEYQSSPQSSISYYQNNNNNNNNSPLIQPQQQQQYVYPYYFRYSQVVWYLYQISIGLDNLHANKIAHRDLKSNNIFVTLSESEVKICKIGDFDISRSFNNPKVLNVLSNPTALQQQKLNNFFQSATTTTTTEQTTEPIEVAATTTPQTIHSAFQHDILSFGFIVLDFLTLSNYSCFDSKFDTSNYYDDDKFNNKSNTKIKKPDLPDYIKKDEKLWEPVIQLYKSCTSDDPNKRPSSLGVKFHLANLYKDIIESGTEVWSIEKDSSSK</sequence>
<comment type="catalytic activity">
    <reaction>
        <text>L-seryl-[protein] + ATP = O-phospho-L-seryl-[protein] + ADP + H(+)</text>
        <dbReference type="Rhea" id="RHEA:17989"/>
        <dbReference type="Rhea" id="RHEA-COMP:9863"/>
        <dbReference type="Rhea" id="RHEA-COMP:11604"/>
        <dbReference type="ChEBI" id="CHEBI:15378"/>
        <dbReference type="ChEBI" id="CHEBI:29999"/>
        <dbReference type="ChEBI" id="CHEBI:30616"/>
        <dbReference type="ChEBI" id="CHEBI:83421"/>
        <dbReference type="ChEBI" id="CHEBI:456216"/>
        <dbReference type="EC" id="2.7.11.1"/>
    </reaction>
</comment>
<comment type="catalytic activity">
    <reaction>
        <text>L-threonyl-[protein] + ATP = O-phospho-L-threonyl-[protein] + ADP + H(+)</text>
        <dbReference type="Rhea" id="RHEA:46608"/>
        <dbReference type="Rhea" id="RHEA-COMP:11060"/>
        <dbReference type="Rhea" id="RHEA-COMP:11605"/>
        <dbReference type="ChEBI" id="CHEBI:15378"/>
        <dbReference type="ChEBI" id="CHEBI:30013"/>
        <dbReference type="ChEBI" id="CHEBI:30616"/>
        <dbReference type="ChEBI" id="CHEBI:61977"/>
        <dbReference type="ChEBI" id="CHEBI:456216"/>
        <dbReference type="EC" id="2.7.11.1"/>
    </reaction>
</comment>
<comment type="subcellular location">
    <subcellularLocation>
        <location evidence="4">Membrane</location>
        <topology evidence="4">Multi-pass membrane protein</topology>
    </subcellularLocation>
</comment>
<comment type="similarity">
    <text evidence="2">Belongs to the protein kinase superfamily. Ser/Thr protein kinase family.</text>
</comment>
<keyword id="KW-0067">ATP-binding</keyword>
<keyword id="KW-0325">Glycoprotein</keyword>
<keyword id="KW-0418">Kinase</keyword>
<keyword id="KW-0472">Membrane</keyword>
<keyword id="KW-0547">Nucleotide-binding</keyword>
<keyword id="KW-1185">Reference proteome</keyword>
<keyword id="KW-0723">Serine/threonine-protein kinase</keyword>
<keyword id="KW-0808">Transferase</keyword>
<keyword id="KW-0812">Transmembrane</keyword>
<keyword id="KW-1133">Transmembrane helix</keyword>
<organism>
    <name type="scientific">Dictyostelium discoideum</name>
    <name type="common">Social amoeba</name>
    <dbReference type="NCBI Taxonomy" id="44689"/>
    <lineage>
        <taxon>Eukaryota</taxon>
        <taxon>Amoebozoa</taxon>
        <taxon>Evosea</taxon>
        <taxon>Eumycetozoa</taxon>
        <taxon>Dictyostelia</taxon>
        <taxon>Dictyosteliales</taxon>
        <taxon>Dictyosteliaceae</taxon>
        <taxon>Dictyostelium</taxon>
    </lineage>
</organism>
<proteinExistence type="inferred from homology"/>
<dbReference type="EC" id="2.7.11.1"/>
<dbReference type="EMBL" id="AAFI02000040">
    <property type="protein sequence ID" value="EAL66962.1"/>
    <property type="molecule type" value="Genomic_DNA"/>
</dbReference>
<dbReference type="RefSeq" id="XP_640911.1">
    <property type="nucleotide sequence ID" value="XM_635819.1"/>
</dbReference>
<dbReference type="FunCoup" id="Q54U65">
    <property type="interactions" value="363"/>
</dbReference>
<dbReference type="STRING" id="44689.Q54U65"/>
<dbReference type="GlyCosmos" id="Q54U65">
    <property type="glycosylation" value="3 sites, No reported glycans"/>
</dbReference>
<dbReference type="GlyGen" id="Q54U65">
    <property type="glycosylation" value="3 sites"/>
</dbReference>
<dbReference type="PaxDb" id="44689-DDB0220006"/>
<dbReference type="EnsemblProtists" id="EAL66962">
    <property type="protein sequence ID" value="EAL66962"/>
    <property type="gene ID" value="DDB_G0281331"/>
</dbReference>
<dbReference type="GeneID" id="8622973"/>
<dbReference type="KEGG" id="ddi:DDB_G0281331"/>
<dbReference type="dictyBase" id="DDB_G0281331"/>
<dbReference type="VEuPathDB" id="AmoebaDB:DDB_G0281331"/>
<dbReference type="eggNOG" id="KOG0197">
    <property type="taxonomic scope" value="Eukaryota"/>
</dbReference>
<dbReference type="HOGENOM" id="CLU_392034_0_0_1"/>
<dbReference type="InParanoid" id="Q54U65"/>
<dbReference type="OMA" id="FMEYIPH"/>
<dbReference type="PRO" id="PR:Q54U65"/>
<dbReference type="Proteomes" id="UP000002195">
    <property type="component" value="Chromosome 3"/>
</dbReference>
<dbReference type="GO" id="GO:0016020">
    <property type="term" value="C:membrane"/>
    <property type="evidence" value="ECO:0007669"/>
    <property type="project" value="UniProtKB-SubCell"/>
</dbReference>
<dbReference type="GO" id="GO:0005524">
    <property type="term" value="F:ATP binding"/>
    <property type="evidence" value="ECO:0007669"/>
    <property type="project" value="UniProtKB-KW"/>
</dbReference>
<dbReference type="GO" id="GO:0106310">
    <property type="term" value="F:protein serine kinase activity"/>
    <property type="evidence" value="ECO:0007669"/>
    <property type="project" value="RHEA"/>
</dbReference>
<dbReference type="GO" id="GO:0004674">
    <property type="term" value="F:protein serine/threonine kinase activity"/>
    <property type="evidence" value="ECO:0000318"/>
    <property type="project" value="GO_Central"/>
</dbReference>
<dbReference type="Gene3D" id="1.10.510.10">
    <property type="entry name" value="Transferase(Phosphotransferase) domain 1"/>
    <property type="match status" value="2"/>
</dbReference>
<dbReference type="InterPro" id="IPR011009">
    <property type="entry name" value="Kinase-like_dom_sf"/>
</dbReference>
<dbReference type="InterPro" id="IPR000719">
    <property type="entry name" value="Prot_kinase_dom"/>
</dbReference>
<dbReference type="InterPro" id="IPR001245">
    <property type="entry name" value="Ser-Thr/Tyr_kinase_cat_dom"/>
</dbReference>
<dbReference type="InterPro" id="IPR008271">
    <property type="entry name" value="Ser/Thr_kinase_AS"/>
</dbReference>
<dbReference type="InterPro" id="IPR053083">
    <property type="entry name" value="TF_kinase-domain_protein"/>
</dbReference>
<dbReference type="PANTHER" id="PTHR44305">
    <property type="entry name" value="SI:DKEY-192D15.2-RELATED"/>
    <property type="match status" value="1"/>
</dbReference>
<dbReference type="Pfam" id="PF07714">
    <property type="entry name" value="PK_Tyr_Ser-Thr"/>
    <property type="match status" value="1"/>
</dbReference>
<dbReference type="SMART" id="SM00220">
    <property type="entry name" value="S_TKc"/>
    <property type="match status" value="1"/>
</dbReference>
<dbReference type="SUPFAM" id="SSF56112">
    <property type="entry name" value="Protein kinase-like (PK-like)"/>
    <property type="match status" value="1"/>
</dbReference>
<dbReference type="PROSITE" id="PS50011">
    <property type="entry name" value="PROTEIN_KINASE_DOM"/>
    <property type="match status" value="1"/>
</dbReference>
<dbReference type="PROSITE" id="PS00108">
    <property type="entry name" value="PROTEIN_KINASE_ST"/>
    <property type="match status" value="1"/>
</dbReference>
<accession>Q54U65</accession>
<feature type="chain" id="PRO_0000362005" description="Seven transmembrane domain-containing serine/threonine-protein kinase 2">
    <location>
        <begin position="1"/>
        <end position="704"/>
    </location>
</feature>
<feature type="topological domain" description="Extracellular" evidence="1">
    <location>
        <begin position="1"/>
        <end position="5"/>
    </location>
</feature>
<feature type="transmembrane region" description="Helical; Name=1" evidence="1">
    <location>
        <begin position="6"/>
        <end position="26"/>
    </location>
</feature>
<feature type="topological domain" description="Cytoplasmic" evidence="1">
    <location>
        <begin position="27"/>
        <end position="42"/>
    </location>
</feature>
<feature type="transmembrane region" description="Helical; Name=2" evidence="1">
    <location>
        <begin position="43"/>
        <end position="63"/>
    </location>
</feature>
<feature type="topological domain" description="Extracellular" evidence="1">
    <location>
        <begin position="64"/>
        <end position="76"/>
    </location>
</feature>
<feature type="transmembrane region" description="Helical; Name=3" evidence="1">
    <location>
        <begin position="77"/>
        <end position="97"/>
    </location>
</feature>
<feature type="topological domain" description="Cytoplasmic" evidence="1">
    <location>
        <begin position="98"/>
        <end position="121"/>
    </location>
</feature>
<feature type="transmembrane region" description="Helical; Name=4" evidence="1">
    <location>
        <begin position="122"/>
        <end position="142"/>
    </location>
</feature>
<feature type="topological domain" description="Extracellular" evidence="1">
    <location>
        <begin position="143"/>
        <end position="185"/>
    </location>
</feature>
<feature type="transmembrane region" description="Helical; Name=5" evidence="1">
    <location>
        <begin position="186"/>
        <end position="206"/>
    </location>
</feature>
<feature type="topological domain" description="Cytoplasmic" evidence="1">
    <location>
        <begin position="207"/>
        <end position="224"/>
    </location>
</feature>
<feature type="transmembrane region" description="Helical; Name=6" evidence="1">
    <location>
        <begin position="225"/>
        <end position="245"/>
    </location>
</feature>
<feature type="topological domain" description="Extracellular" evidence="1">
    <location>
        <begin position="246"/>
        <end position="265"/>
    </location>
</feature>
<feature type="transmembrane region" description="Helical; Name=7" evidence="1">
    <location>
        <begin position="266"/>
        <end position="286"/>
    </location>
</feature>
<feature type="topological domain" description="Cytoplasmic" evidence="1">
    <location>
        <begin position="287"/>
        <end position="704"/>
    </location>
</feature>
<feature type="domain" description="Protein kinase" evidence="2">
    <location>
        <begin position="317"/>
        <end position="682"/>
    </location>
</feature>
<feature type="active site" description="Proton acceptor" evidence="2 3">
    <location>
        <position position="506"/>
    </location>
</feature>
<feature type="binding site" evidence="2">
    <location>
        <begin position="323"/>
        <end position="331"/>
    </location>
    <ligand>
        <name>ATP</name>
        <dbReference type="ChEBI" id="CHEBI:30616"/>
    </ligand>
</feature>
<feature type="binding site" evidence="2">
    <location>
        <position position="350"/>
    </location>
    <ligand>
        <name>ATP</name>
        <dbReference type="ChEBI" id="CHEBI:30616"/>
    </ligand>
</feature>
<feature type="glycosylation site" description="N-linked (GlcNAc...) asparagine" evidence="1">
    <location>
        <position position="147"/>
    </location>
</feature>
<feature type="glycosylation site" description="N-linked (GlcNAc...) asparagine" evidence="1">
    <location>
        <position position="158"/>
    </location>
</feature>
<feature type="glycosylation site" description="N-linked (GlcNAc...) asparagine" evidence="1">
    <location>
        <position position="251"/>
    </location>
</feature>
<evidence type="ECO:0000255" key="1"/>
<evidence type="ECO:0000255" key="2">
    <source>
        <dbReference type="PROSITE-ProRule" id="PRU00159"/>
    </source>
</evidence>
<evidence type="ECO:0000255" key="3">
    <source>
        <dbReference type="PROSITE-ProRule" id="PRU10027"/>
    </source>
</evidence>
<evidence type="ECO:0000305" key="4"/>
<protein>
    <recommendedName>
        <fullName>Seven transmembrane domain-containing serine/threonine-protein kinase 2</fullName>
        <ecNumber>2.7.11.1</ecNumber>
    </recommendedName>
</protein>